<organism>
    <name type="scientific">Mus musculus</name>
    <name type="common">Mouse</name>
    <dbReference type="NCBI Taxonomy" id="10090"/>
    <lineage>
        <taxon>Eukaryota</taxon>
        <taxon>Metazoa</taxon>
        <taxon>Chordata</taxon>
        <taxon>Craniata</taxon>
        <taxon>Vertebrata</taxon>
        <taxon>Euteleostomi</taxon>
        <taxon>Mammalia</taxon>
        <taxon>Eutheria</taxon>
        <taxon>Euarchontoglires</taxon>
        <taxon>Glires</taxon>
        <taxon>Rodentia</taxon>
        <taxon>Myomorpha</taxon>
        <taxon>Muroidea</taxon>
        <taxon>Muridae</taxon>
        <taxon>Murinae</taxon>
        <taxon>Mus</taxon>
        <taxon>Mus</taxon>
    </lineage>
</organism>
<name>VMAC_MOUSE</name>
<evidence type="ECO:0000250" key="1"/>
<evidence type="ECO:0000255" key="2"/>
<evidence type="ECO:0000256" key="3">
    <source>
        <dbReference type="SAM" id="MobiDB-lite"/>
    </source>
</evidence>
<proteinExistence type="evidence at protein level"/>
<sequence length="174" mass="19017">MSAPPPLQIREANAHLAAVHRRAAELERRLLAAERTIGAQAERLACHDQHLRAALDELGRAKDREISALQEQLLSSEATVRSLQAAVDQRDQMIQQLQPRADLLQDITRHRPPLAALLATLEEAEELGPLPASHSHRAQLLPDGPGPPLGNNMGKEEGQDDQDDQQPAVFGTTV</sequence>
<reference key="1">
    <citation type="journal article" date="2005" name="Science">
        <title>The transcriptional landscape of the mammalian genome.</title>
        <authorList>
            <person name="Carninci P."/>
            <person name="Kasukawa T."/>
            <person name="Katayama S."/>
            <person name="Gough J."/>
            <person name="Frith M.C."/>
            <person name="Maeda N."/>
            <person name="Oyama R."/>
            <person name="Ravasi T."/>
            <person name="Lenhard B."/>
            <person name="Wells C."/>
            <person name="Kodzius R."/>
            <person name="Shimokawa K."/>
            <person name="Bajic V.B."/>
            <person name="Brenner S.E."/>
            <person name="Batalov S."/>
            <person name="Forrest A.R."/>
            <person name="Zavolan M."/>
            <person name="Davis M.J."/>
            <person name="Wilming L.G."/>
            <person name="Aidinis V."/>
            <person name="Allen J.E."/>
            <person name="Ambesi-Impiombato A."/>
            <person name="Apweiler R."/>
            <person name="Aturaliya R.N."/>
            <person name="Bailey T.L."/>
            <person name="Bansal M."/>
            <person name="Baxter L."/>
            <person name="Beisel K.W."/>
            <person name="Bersano T."/>
            <person name="Bono H."/>
            <person name="Chalk A.M."/>
            <person name="Chiu K.P."/>
            <person name="Choudhary V."/>
            <person name="Christoffels A."/>
            <person name="Clutterbuck D.R."/>
            <person name="Crowe M.L."/>
            <person name="Dalla E."/>
            <person name="Dalrymple B.P."/>
            <person name="de Bono B."/>
            <person name="Della Gatta G."/>
            <person name="di Bernardo D."/>
            <person name="Down T."/>
            <person name="Engstrom P."/>
            <person name="Fagiolini M."/>
            <person name="Faulkner G."/>
            <person name="Fletcher C.F."/>
            <person name="Fukushima T."/>
            <person name="Furuno M."/>
            <person name="Futaki S."/>
            <person name="Gariboldi M."/>
            <person name="Georgii-Hemming P."/>
            <person name="Gingeras T.R."/>
            <person name="Gojobori T."/>
            <person name="Green R.E."/>
            <person name="Gustincich S."/>
            <person name="Harbers M."/>
            <person name="Hayashi Y."/>
            <person name="Hensch T.K."/>
            <person name="Hirokawa N."/>
            <person name="Hill D."/>
            <person name="Huminiecki L."/>
            <person name="Iacono M."/>
            <person name="Ikeo K."/>
            <person name="Iwama A."/>
            <person name="Ishikawa T."/>
            <person name="Jakt M."/>
            <person name="Kanapin A."/>
            <person name="Katoh M."/>
            <person name="Kawasawa Y."/>
            <person name="Kelso J."/>
            <person name="Kitamura H."/>
            <person name="Kitano H."/>
            <person name="Kollias G."/>
            <person name="Krishnan S.P."/>
            <person name="Kruger A."/>
            <person name="Kummerfeld S.K."/>
            <person name="Kurochkin I.V."/>
            <person name="Lareau L.F."/>
            <person name="Lazarevic D."/>
            <person name="Lipovich L."/>
            <person name="Liu J."/>
            <person name="Liuni S."/>
            <person name="McWilliam S."/>
            <person name="Madan Babu M."/>
            <person name="Madera M."/>
            <person name="Marchionni L."/>
            <person name="Matsuda H."/>
            <person name="Matsuzawa S."/>
            <person name="Miki H."/>
            <person name="Mignone F."/>
            <person name="Miyake S."/>
            <person name="Morris K."/>
            <person name="Mottagui-Tabar S."/>
            <person name="Mulder N."/>
            <person name="Nakano N."/>
            <person name="Nakauchi H."/>
            <person name="Ng P."/>
            <person name="Nilsson R."/>
            <person name="Nishiguchi S."/>
            <person name="Nishikawa S."/>
            <person name="Nori F."/>
            <person name="Ohara O."/>
            <person name="Okazaki Y."/>
            <person name="Orlando V."/>
            <person name="Pang K.C."/>
            <person name="Pavan W.J."/>
            <person name="Pavesi G."/>
            <person name="Pesole G."/>
            <person name="Petrovsky N."/>
            <person name="Piazza S."/>
            <person name="Reed J."/>
            <person name="Reid J.F."/>
            <person name="Ring B.Z."/>
            <person name="Ringwald M."/>
            <person name="Rost B."/>
            <person name="Ruan Y."/>
            <person name="Salzberg S.L."/>
            <person name="Sandelin A."/>
            <person name="Schneider C."/>
            <person name="Schoenbach C."/>
            <person name="Sekiguchi K."/>
            <person name="Semple C.A."/>
            <person name="Seno S."/>
            <person name="Sessa L."/>
            <person name="Sheng Y."/>
            <person name="Shibata Y."/>
            <person name="Shimada H."/>
            <person name="Shimada K."/>
            <person name="Silva D."/>
            <person name="Sinclair B."/>
            <person name="Sperling S."/>
            <person name="Stupka E."/>
            <person name="Sugiura K."/>
            <person name="Sultana R."/>
            <person name="Takenaka Y."/>
            <person name="Taki K."/>
            <person name="Tammoja K."/>
            <person name="Tan S.L."/>
            <person name="Tang S."/>
            <person name="Taylor M.S."/>
            <person name="Tegner J."/>
            <person name="Teichmann S.A."/>
            <person name="Ueda H.R."/>
            <person name="van Nimwegen E."/>
            <person name="Verardo R."/>
            <person name="Wei C.L."/>
            <person name="Yagi K."/>
            <person name="Yamanishi H."/>
            <person name="Zabarovsky E."/>
            <person name="Zhu S."/>
            <person name="Zimmer A."/>
            <person name="Hide W."/>
            <person name="Bult C."/>
            <person name="Grimmond S.M."/>
            <person name="Teasdale R.D."/>
            <person name="Liu E.T."/>
            <person name="Brusic V."/>
            <person name="Quackenbush J."/>
            <person name="Wahlestedt C."/>
            <person name="Mattick J.S."/>
            <person name="Hume D.A."/>
            <person name="Kai C."/>
            <person name="Sasaki D."/>
            <person name="Tomaru Y."/>
            <person name="Fukuda S."/>
            <person name="Kanamori-Katayama M."/>
            <person name="Suzuki M."/>
            <person name="Aoki J."/>
            <person name="Arakawa T."/>
            <person name="Iida J."/>
            <person name="Imamura K."/>
            <person name="Itoh M."/>
            <person name="Kato T."/>
            <person name="Kawaji H."/>
            <person name="Kawagashira N."/>
            <person name="Kawashima T."/>
            <person name="Kojima M."/>
            <person name="Kondo S."/>
            <person name="Konno H."/>
            <person name="Nakano K."/>
            <person name="Ninomiya N."/>
            <person name="Nishio T."/>
            <person name="Okada M."/>
            <person name="Plessy C."/>
            <person name="Shibata K."/>
            <person name="Shiraki T."/>
            <person name="Suzuki S."/>
            <person name="Tagami M."/>
            <person name="Waki K."/>
            <person name="Watahiki A."/>
            <person name="Okamura-Oho Y."/>
            <person name="Suzuki H."/>
            <person name="Kawai J."/>
            <person name="Hayashizaki Y."/>
        </authorList>
    </citation>
    <scope>NUCLEOTIDE SEQUENCE [LARGE SCALE MRNA]</scope>
    <source>
        <strain>C57BL/6J</strain>
        <strain>NOD</strain>
        <tissue>Dendritic cell</tissue>
        <tissue>Muellerian duct</tissue>
        <tissue>Placenta</tissue>
    </source>
</reference>
<reference key="2">
    <citation type="journal article" date="2004" name="Genome Res.">
        <title>The status, quality, and expansion of the NIH full-length cDNA project: the Mammalian Gene Collection (MGC).</title>
        <authorList>
            <consortium name="The MGC Project Team"/>
        </authorList>
    </citation>
    <scope>NUCLEOTIDE SEQUENCE [LARGE SCALE MRNA]</scope>
    <source>
        <strain>FVB/N</strain>
        <tissue>Mammary tumor</tissue>
    </source>
</reference>
<reference key="3">
    <citation type="journal article" date="2010" name="Cell">
        <title>A tissue-specific atlas of mouse protein phosphorylation and expression.</title>
        <authorList>
            <person name="Huttlin E.L."/>
            <person name="Jedrychowski M.P."/>
            <person name="Elias J.E."/>
            <person name="Goswami T."/>
            <person name="Rad R."/>
            <person name="Beausoleil S.A."/>
            <person name="Villen J."/>
            <person name="Haas W."/>
            <person name="Sowa M.E."/>
            <person name="Gygi S.P."/>
        </authorList>
    </citation>
    <scope>IDENTIFICATION BY MASS SPECTROMETRY [LARGE SCALE ANALYSIS]</scope>
    <source>
        <tissue>Pancreas</tissue>
    </source>
</reference>
<accession>Q8BP01</accession>
<accession>Q3UKV2</accession>
<feature type="chain" id="PRO_0000319067" description="Vimentin-type intermediate filament-associated coiled-coil protein">
    <location>
        <begin position="1"/>
        <end position="174"/>
    </location>
</feature>
<feature type="region of interest" description="Disordered" evidence="3">
    <location>
        <begin position="128"/>
        <end position="174"/>
    </location>
</feature>
<feature type="coiled-coil region" evidence="2">
    <location>
        <begin position="7"/>
        <end position="97"/>
    </location>
</feature>
<dbReference type="EMBL" id="AK078549">
    <property type="protein sequence ID" value="BAC37331.1"/>
    <property type="molecule type" value="mRNA"/>
</dbReference>
<dbReference type="EMBL" id="AK145854">
    <property type="protein sequence ID" value="BAE26699.1"/>
    <property type="molecule type" value="mRNA"/>
</dbReference>
<dbReference type="EMBL" id="AK170944">
    <property type="protein sequence ID" value="BAE42132.1"/>
    <property type="molecule type" value="mRNA"/>
</dbReference>
<dbReference type="EMBL" id="BC026472">
    <property type="protein sequence ID" value="AAH26472.1"/>
    <property type="molecule type" value="mRNA"/>
</dbReference>
<dbReference type="CCDS" id="CCDS28912.1"/>
<dbReference type="RefSeq" id="NP_849257.1">
    <property type="nucleotide sequence ID" value="NM_178926.4"/>
</dbReference>
<dbReference type="SMR" id="Q8BP01"/>
<dbReference type="BioGRID" id="223102">
    <property type="interactions" value="4"/>
</dbReference>
<dbReference type="FunCoup" id="Q8BP01">
    <property type="interactions" value="57"/>
</dbReference>
<dbReference type="IntAct" id="Q8BP01">
    <property type="interactions" value="1"/>
</dbReference>
<dbReference type="STRING" id="10090.ENSMUSP00000064120"/>
<dbReference type="iPTMnet" id="Q8BP01"/>
<dbReference type="PhosphoSitePlus" id="Q8BP01"/>
<dbReference type="PaxDb" id="10090-ENSMUSP00000064120"/>
<dbReference type="ProteomicsDB" id="299953"/>
<dbReference type="Pumba" id="Q8BP01"/>
<dbReference type="Antibodypedia" id="77776">
    <property type="antibodies" value="4 antibodies from 4 providers"/>
</dbReference>
<dbReference type="DNASU" id="106639"/>
<dbReference type="Ensembl" id="ENSMUST00000067931.7">
    <property type="protein sequence ID" value="ENSMUSP00000064120.6"/>
    <property type="gene ID" value="ENSMUSG00000054723.7"/>
</dbReference>
<dbReference type="GeneID" id="106639"/>
<dbReference type="KEGG" id="mmu:106639"/>
<dbReference type="UCSC" id="uc008dcx.2">
    <property type="organism name" value="mouse"/>
</dbReference>
<dbReference type="AGR" id="MGI:2146912"/>
<dbReference type="CTD" id="400673"/>
<dbReference type="MGI" id="MGI:2146912">
    <property type="gene designation" value="Vmac"/>
</dbReference>
<dbReference type="VEuPathDB" id="HostDB:ENSMUSG00000054723"/>
<dbReference type="eggNOG" id="ENOG502SD5N">
    <property type="taxonomic scope" value="Eukaryota"/>
</dbReference>
<dbReference type="GeneTree" id="ENSGT00390000007212"/>
<dbReference type="HOGENOM" id="CLU_136281_0_0_1"/>
<dbReference type="InParanoid" id="Q8BP01"/>
<dbReference type="OMA" id="ERTVHGQ"/>
<dbReference type="OrthoDB" id="6413631at2759"/>
<dbReference type="PhylomeDB" id="Q8BP01"/>
<dbReference type="TreeFam" id="TF332566"/>
<dbReference type="BioGRID-ORCS" id="106639">
    <property type="hits" value="2 hits in 76 CRISPR screens"/>
</dbReference>
<dbReference type="PRO" id="PR:Q8BP01"/>
<dbReference type="Proteomes" id="UP000000589">
    <property type="component" value="Chromosome 17"/>
</dbReference>
<dbReference type="RNAct" id="Q8BP01">
    <property type="molecule type" value="protein"/>
</dbReference>
<dbReference type="Bgee" id="ENSMUSG00000054723">
    <property type="expression patterns" value="Expressed in lacrimal gland and 149 other cell types or tissues"/>
</dbReference>
<dbReference type="ExpressionAtlas" id="Q8BP01">
    <property type="expression patterns" value="baseline and differential"/>
</dbReference>
<dbReference type="GO" id="GO:0005737">
    <property type="term" value="C:cytoplasm"/>
    <property type="evidence" value="ECO:0007669"/>
    <property type="project" value="UniProtKB-SubCell"/>
</dbReference>
<keyword id="KW-0175">Coiled coil</keyword>
<keyword id="KW-0963">Cytoplasm</keyword>
<keyword id="KW-1185">Reference proteome</keyword>
<comment type="subcellular location">
    <subcellularLocation>
        <location evidence="1">Cytoplasm</location>
    </subcellularLocation>
    <text evidence="1">Colocalizes with vimentin-type intermediate filaments.</text>
</comment>
<gene>
    <name type="primary">Vmac</name>
</gene>
<protein>
    <recommendedName>
        <fullName>Vimentin-type intermediate filament-associated coiled-coil protein</fullName>
    </recommendedName>
</protein>